<reference key="1">
    <citation type="journal article" date="2001" name="Science">
        <title>Comparative genomics of Listeria species.</title>
        <authorList>
            <person name="Glaser P."/>
            <person name="Frangeul L."/>
            <person name="Buchrieser C."/>
            <person name="Rusniok C."/>
            <person name="Amend A."/>
            <person name="Baquero F."/>
            <person name="Berche P."/>
            <person name="Bloecker H."/>
            <person name="Brandt P."/>
            <person name="Chakraborty T."/>
            <person name="Charbit A."/>
            <person name="Chetouani F."/>
            <person name="Couve E."/>
            <person name="de Daruvar A."/>
            <person name="Dehoux P."/>
            <person name="Domann E."/>
            <person name="Dominguez-Bernal G."/>
            <person name="Duchaud E."/>
            <person name="Durant L."/>
            <person name="Dussurget O."/>
            <person name="Entian K.-D."/>
            <person name="Fsihi H."/>
            <person name="Garcia-del Portillo F."/>
            <person name="Garrido P."/>
            <person name="Gautier L."/>
            <person name="Goebel W."/>
            <person name="Gomez-Lopez N."/>
            <person name="Hain T."/>
            <person name="Hauf J."/>
            <person name="Jackson D."/>
            <person name="Jones L.-M."/>
            <person name="Kaerst U."/>
            <person name="Kreft J."/>
            <person name="Kuhn M."/>
            <person name="Kunst F."/>
            <person name="Kurapkat G."/>
            <person name="Madueno E."/>
            <person name="Maitournam A."/>
            <person name="Mata Vicente J."/>
            <person name="Ng E."/>
            <person name="Nedjari H."/>
            <person name="Nordsiek G."/>
            <person name="Novella S."/>
            <person name="de Pablos B."/>
            <person name="Perez-Diaz J.-C."/>
            <person name="Purcell R."/>
            <person name="Remmel B."/>
            <person name="Rose M."/>
            <person name="Schlueter T."/>
            <person name="Simoes N."/>
            <person name="Tierrez A."/>
            <person name="Vazquez-Boland J.-A."/>
            <person name="Voss H."/>
            <person name="Wehland J."/>
            <person name="Cossart P."/>
        </authorList>
    </citation>
    <scope>NUCLEOTIDE SEQUENCE [LARGE SCALE GENOMIC DNA]</scope>
    <source>
        <strain>ATCC BAA-680 / CLIP 11262</strain>
    </source>
</reference>
<sequence>MRSASKTRITGETSIELSINLDSQADSTISTGVGFLDHMLTLFSKHSRITLNVKADGDTYVDAHHTVEDVGITLGLCLKEALSDKASINRYGSSYVPMDESLGFCALDLSGRSYLVFDAELTNPKLGDFDTELVEEFFQAVAFNTEMNLHLRVLYGKNTHHKIEALFKAFGRALREAITINPEIKGVNSTKGVL</sequence>
<accession>Q92E85</accession>
<keyword id="KW-0028">Amino-acid biosynthesis</keyword>
<keyword id="KW-0963">Cytoplasm</keyword>
<keyword id="KW-0368">Histidine biosynthesis</keyword>
<keyword id="KW-0456">Lyase</keyword>
<gene>
    <name evidence="1" type="primary">hisB</name>
    <name type="ordered locus">lin0575</name>
</gene>
<protein>
    <recommendedName>
        <fullName evidence="1">Imidazoleglycerol-phosphate dehydratase</fullName>
        <shortName evidence="1">IGPD</shortName>
        <ecNumber evidence="1">4.2.1.19</ecNumber>
    </recommendedName>
</protein>
<name>HIS7_LISIN</name>
<proteinExistence type="inferred from homology"/>
<feature type="chain" id="PRO_0000158139" description="Imidazoleglycerol-phosphate dehydratase">
    <location>
        <begin position="1"/>
        <end position="194"/>
    </location>
</feature>
<organism>
    <name type="scientific">Listeria innocua serovar 6a (strain ATCC BAA-680 / CLIP 11262)</name>
    <dbReference type="NCBI Taxonomy" id="272626"/>
    <lineage>
        <taxon>Bacteria</taxon>
        <taxon>Bacillati</taxon>
        <taxon>Bacillota</taxon>
        <taxon>Bacilli</taxon>
        <taxon>Bacillales</taxon>
        <taxon>Listeriaceae</taxon>
        <taxon>Listeria</taxon>
    </lineage>
</organism>
<evidence type="ECO:0000255" key="1">
    <source>
        <dbReference type="HAMAP-Rule" id="MF_00076"/>
    </source>
</evidence>
<comment type="catalytic activity">
    <reaction evidence="1">
        <text>D-erythro-1-(imidazol-4-yl)glycerol 3-phosphate = 3-(imidazol-4-yl)-2-oxopropyl phosphate + H2O</text>
        <dbReference type="Rhea" id="RHEA:11040"/>
        <dbReference type="ChEBI" id="CHEBI:15377"/>
        <dbReference type="ChEBI" id="CHEBI:57766"/>
        <dbReference type="ChEBI" id="CHEBI:58278"/>
        <dbReference type="EC" id="4.2.1.19"/>
    </reaction>
</comment>
<comment type="pathway">
    <text evidence="1">Amino-acid biosynthesis; L-histidine biosynthesis; L-histidine from 5-phospho-alpha-D-ribose 1-diphosphate: step 6/9.</text>
</comment>
<comment type="subcellular location">
    <subcellularLocation>
        <location evidence="1">Cytoplasm</location>
    </subcellularLocation>
</comment>
<comment type="similarity">
    <text evidence="1">Belongs to the imidazoleglycerol-phosphate dehydratase family.</text>
</comment>
<dbReference type="EC" id="4.2.1.19" evidence="1"/>
<dbReference type="EMBL" id="AL596165">
    <property type="protein sequence ID" value="CAC95807.1"/>
    <property type="molecule type" value="Genomic_DNA"/>
</dbReference>
<dbReference type="PIR" id="AG1504">
    <property type="entry name" value="AG1504"/>
</dbReference>
<dbReference type="RefSeq" id="WP_010990494.1">
    <property type="nucleotide sequence ID" value="NC_003212.1"/>
</dbReference>
<dbReference type="SMR" id="Q92E85"/>
<dbReference type="STRING" id="272626.gene:17564901"/>
<dbReference type="KEGG" id="lin:hisB"/>
<dbReference type="eggNOG" id="COG0131">
    <property type="taxonomic scope" value="Bacteria"/>
</dbReference>
<dbReference type="HOGENOM" id="CLU_044308_3_0_9"/>
<dbReference type="OrthoDB" id="9790411at2"/>
<dbReference type="UniPathway" id="UPA00031">
    <property type="reaction ID" value="UER00011"/>
</dbReference>
<dbReference type="Proteomes" id="UP000002513">
    <property type="component" value="Chromosome"/>
</dbReference>
<dbReference type="GO" id="GO:0005737">
    <property type="term" value="C:cytoplasm"/>
    <property type="evidence" value="ECO:0007669"/>
    <property type="project" value="UniProtKB-SubCell"/>
</dbReference>
<dbReference type="GO" id="GO:0004424">
    <property type="term" value="F:imidazoleglycerol-phosphate dehydratase activity"/>
    <property type="evidence" value="ECO:0007669"/>
    <property type="project" value="UniProtKB-UniRule"/>
</dbReference>
<dbReference type="GO" id="GO:0000105">
    <property type="term" value="P:L-histidine biosynthetic process"/>
    <property type="evidence" value="ECO:0007669"/>
    <property type="project" value="UniProtKB-UniRule"/>
</dbReference>
<dbReference type="CDD" id="cd07914">
    <property type="entry name" value="IGPD"/>
    <property type="match status" value="1"/>
</dbReference>
<dbReference type="FunFam" id="3.30.230.40:FF:000001">
    <property type="entry name" value="Imidazoleglycerol-phosphate dehydratase HisB"/>
    <property type="match status" value="1"/>
</dbReference>
<dbReference type="FunFam" id="3.30.230.40:FF:000003">
    <property type="entry name" value="Imidazoleglycerol-phosphate dehydratase HisB"/>
    <property type="match status" value="1"/>
</dbReference>
<dbReference type="Gene3D" id="3.30.230.40">
    <property type="entry name" value="Imidazole glycerol phosphate dehydratase, domain 1"/>
    <property type="match status" value="2"/>
</dbReference>
<dbReference type="HAMAP" id="MF_00076">
    <property type="entry name" value="HisB"/>
    <property type="match status" value="1"/>
</dbReference>
<dbReference type="InterPro" id="IPR038494">
    <property type="entry name" value="IGPD_sf"/>
</dbReference>
<dbReference type="InterPro" id="IPR000807">
    <property type="entry name" value="ImidazoleglycerolP_deHydtase"/>
</dbReference>
<dbReference type="InterPro" id="IPR020565">
    <property type="entry name" value="ImidazoleglycerP_deHydtase_CS"/>
</dbReference>
<dbReference type="InterPro" id="IPR020568">
    <property type="entry name" value="Ribosomal_Su5_D2-typ_SF"/>
</dbReference>
<dbReference type="NCBIfam" id="NF002107">
    <property type="entry name" value="PRK00951.1-2"/>
    <property type="match status" value="1"/>
</dbReference>
<dbReference type="NCBIfam" id="NF002111">
    <property type="entry name" value="PRK00951.2-1"/>
    <property type="match status" value="1"/>
</dbReference>
<dbReference type="NCBIfam" id="NF002114">
    <property type="entry name" value="PRK00951.2-4"/>
    <property type="match status" value="1"/>
</dbReference>
<dbReference type="PANTHER" id="PTHR23133:SF2">
    <property type="entry name" value="IMIDAZOLEGLYCEROL-PHOSPHATE DEHYDRATASE"/>
    <property type="match status" value="1"/>
</dbReference>
<dbReference type="PANTHER" id="PTHR23133">
    <property type="entry name" value="IMIDAZOLEGLYCEROL-PHOSPHATE DEHYDRATASE HIS7"/>
    <property type="match status" value="1"/>
</dbReference>
<dbReference type="Pfam" id="PF00475">
    <property type="entry name" value="IGPD"/>
    <property type="match status" value="1"/>
</dbReference>
<dbReference type="SUPFAM" id="SSF54211">
    <property type="entry name" value="Ribosomal protein S5 domain 2-like"/>
    <property type="match status" value="2"/>
</dbReference>
<dbReference type="PROSITE" id="PS00954">
    <property type="entry name" value="IGP_DEHYDRATASE_1"/>
    <property type="match status" value="1"/>
</dbReference>
<dbReference type="PROSITE" id="PS00955">
    <property type="entry name" value="IGP_DEHYDRATASE_2"/>
    <property type="match status" value="1"/>
</dbReference>